<keyword id="KW-0002">3D-structure</keyword>
<keyword id="KW-0378">Hydrolase</keyword>
<keyword id="KW-0460">Magnesium</keyword>
<keyword id="KW-0546">Nucleotide metabolism</keyword>
<keyword id="KW-0547">Nucleotide-binding</keyword>
<keyword id="KW-1185">Reference proteome</keyword>
<comment type="function">
    <text evidence="2 3">Bifunctional enzyme that catalyzes both the deamination of dCTP to dUTP and the hydrolysis of dUTP to dUMP without releasing the toxic dUTP intermediate.</text>
</comment>
<comment type="catalytic activity">
    <reaction evidence="2 3">
        <text>dCTP + 2 H2O = dUMP + NH4(+) + diphosphate</text>
        <dbReference type="Rhea" id="RHEA:19205"/>
        <dbReference type="ChEBI" id="CHEBI:15377"/>
        <dbReference type="ChEBI" id="CHEBI:28938"/>
        <dbReference type="ChEBI" id="CHEBI:33019"/>
        <dbReference type="ChEBI" id="CHEBI:61481"/>
        <dbReference type="ChEBI" id="CHEBI:246422"/>
        <dbReference type="EC" id="3.5.4.30"/>
    </reaction>
</comment>
<comment type="cofactor">
    <cofactor evidence="3">
        <name>Mg(2+)</name>
        <dbReference type="ChEBI" id="CHEBI:18420"/>
    </cofactor>
</comment>
<comment type="activity regulation">
    <text evidence="3">Inhibited by dTTP.</text>
</comment>
<comment type="pathway">
    <text evidence="2 5">Pyrimidine metabolism; dUMP biosynthesis; dUMP from dCTP: step 1/1.</text>
</comment>
<comment type="subunit">
    <text evidence="2 3">Homotrimer.</text>
</comment>
<comment type="induction">
    <text evidence="3">Repressed by both deoxycytidine and thymidine.</text>
</comment>
<comment type="similarity">
    <text evidence="2">Belongs to the dCTP deaminase family.</text>
</comment>
<protein>
    <recommendedName>
        <fullName evidence="2 5">dCTP deaminase, dUMP-forming</fullName>
        <ecNumber evidence="2 3">3.5.4.30</ecNumber>
    </recommendedName>
    <alternativeName>
        <fullName evidence="2">Bifunctional dCTP deaminase:dUTPase</fullName>
    </alternativeName>
    <alternativeName>
        <fullName evidence="2">DCD-DUT</fullName>
    </alternativeName>
</protein>
<reference key="1">
    <citation type="journal article" date="2000" name="Nucleic Acids Res.">
        <title>Complete genome sequence of the alkaliphilic bacterium Bacillus halodurans and genomic sequence comparison with Bacillus subtilis.</title>
        <authorList>
            <person name="Takami H."/>
            <person name="Nakasone K."/>
            <person name="Takaki Y."/>
            <person name="Maeno G."/>
            <person name="Sasaki R."/>
            <person name="Masui N."/>
            <person name="Fuji F."/>
            <person name="Hirama C."/>
            <person name="Nakamura Y."/>
            <person name="Ogasawara N."/>
            <person name="Kuhara S."/>
            <person name="Horikoshi K."/>
        </authorList>
    </citation>
    <scope>NUCLEOTIDE SEQUENCE [LARGE SCALE GENOMIC DNA]</scope>
    <source>
        <strain>ATCC BAA-125 / DSM 18197 / FERM 7344 / JCM 9153 / C-125</strain>
    </source>
</reference>
<reference evidence="7" key="2">
    <citation type="journal article" date="2015" name="Appl. Environ. Microbiol.">
        <title>Bacillus halodurans strain C125 encodes and synthesizes enzymes from both known pathways to form dUMP directly from cytosine deoxyribonucleotides.</title>
        <authorList>
            <person name="Oehlenschlaeger C.B."/>
            <person name="Lovgreen M.N."/>
            <person name="Reinauer E."/>
            <person name="Lehtinen E."/>
            <person name="Pind M.L."/>
            <person name="Harris P."/>
            <person name="Martinussen J."/>
            <person name="Willemoes M."/>
        </authorList>
    </citation>
    <scope>X-RAY CRYSTALLOGRAPHY (2.35 ANGSTROMS) IN COMPLEX WITH TTP</scope>
    <scope>FUNCTION</scope>
    <scope>CATALYTIC ACTIVITY</scope>
    <scope>COFACTOR</scope>
    <scope>ACTIVITY REGULATION</scope>
    <scope>SUBUNIT</scope>
    <scope>INDUCTION</scope>
    <source>
        <strain>ATCC BAA-125 / DSM 18197 / FERM 7344 / JCM 9153 / C-125</strain>
    </source>
</reference>
<feature type="chain" id="PRO_0000155964" description="dCTP deaminase, dUMP-forming">
    <location>
        <begin position="1"/>
        <end position="177"/>
    </location>
</feature>
<feature type="active site" description="Proton donor/acceptor" evidence="1 2">
    <location>
        <position position="125"/>
    </location>
</feature>
<feature type="binding site" evidence="2 6">
    <location>
        <begin position="98"/>
        <end position="103"/>
    </location>
    <ligand>
        <name>dCTP</name>
        <dbReference type="ChEBI" id="CHEBI:61481"/>
    </ligand>
</feature>
<feature type="binding site" evidence="6">
    <location>
        <position position="110"/>
    </location>
    <ligand>
        <name>dCTP</name>
        <dbReference type="ChEBI" id="CHEBI:61481"/>
    </ligand>
</feature>
<feature type="binding site" evidence="6">
    <location>
        <begin position="115"/>
        <end position="118"/>
    </location>
    <ligand>
        <name>dCTP</name>
        <dbReference type="ChEBI" id="CHEBI:61481"/>
    </ligand>
</feature>
<feature type="binding site" evidence="2 6">
    <location>
        <begin position="123"/>
        <end position="125"/>
    </location>
    <ligand>
        <name>dCTP</name>
        <dbReference type="ChEBI" id="CHEBI:61481"/>
    </ligand>
</feature>
<feature type="binding site" evidence="2 6">
    <location>
        <position position="144"/>
    </location>
    <ligand>
        <name>dCTP</name>
        <dbReference type="ChEBI" id="CHEBI:61481"/>
    </ligand>
</feature>
<feature type="binding site" evidence="6">
    <location>
        <begin position="157"/>
        <end position="160"/>
    </location>
    <ligand>
        <name>dCTP</name>
        <dbReference type="ChEBI" id="CHEBI:61481"/>
    </ligand>
</feature>
<feature type="binding site" evidence="2 6">
    <location>
        <position position="164"/>
    </location>
    <ligand>
        <name>dCTP</name>
        <dbReference type="ChEBI" id="CHEBI:61481"/>
    </ligand>
</feature>
<feature type="site" description="Important for bifunctional activity" evidence="2">
    <location>
        <begin position="112"/>
        <end position="113"/>
    </location>
</feature>
<feature type="helix" evidence="8">
    <location>
        <begin position="5"/>
        <end position="13"/>
    </location>
</feature>
<feature type="strand" evidence="8">
    <location>
        <begin position="16"/>
        <end position="21"/>
    </location>
</feature>
<feature type="helix" evidence="8">
    <location>
        <begin position="24"/>
        <end position="26"/>
    </location>
</feature>
<feature type="strand" evidence="8">
    <location>
        <begin position="32"/>
        <end position="36"/>
    </location>
</feature>
<feature type="strand" evidence="8">
    <location>
        <begin position="38"/>
        <end position="43"/>
    </location>
</feature>
<feature type="turn" evidence="8">
    <location>
        <begin position="45"/>
        <end position="47"/>
    </location>
</feature>
<feature type="strand" evidence="8">
    <location>
        <begin position="49"/>
        <end position="51"/>
    </location>
</feature>
<feature type="strand" evidence="8">
    <location>
        <begin position="53"/>
        <end position="55"/>
    </location>
</feature>
<feature type="strand" evidence="8">
    <location>
        <begin position="59"/>
        <end position="63"/>
    </location>
</feature>
<feature type="strand" evidence="8">
    <location>
        <begin position="66"/>
        <end position="71"/>
    </location>
</feature>
<feature type="strand" evidence="8">
    <location>
        <begin position="76"/>
        <end position="86"/>
    </location>
</feature>
<feature type="strand" evidence="8">
    <location>
        <begin position="91"/>
        <end position="97"/>
    </location>
</feature>
<feature type="helix" evidence="8">
    <location>
        <begin position="99"/>
        <end position="102"/>
    </location>
</feature>
<feature type="turn" evidence="8">
    <location>
        <begin position="103"/>
        <end position="105"/>
    </location>
</feature>
<feature type="strand" evidence="8">
    <location>
        <begin position="106"/>
        <end position="108"/>
    </location>
</feature>
<feature type="strand" evidence="8">
    <location>
        <begin position="112"/>
        <end position="114"/>
    </location>
</feature>
<feature type="strand" evidence="8">
    <location>
        <begin position="119"/>
        <end position="128"/>
    </location>
</feature>
<feature type="strand" evidence="8">
    <location>
        <begin position="130"/>
        <end position="132"/>
    </location>
</feature>
<feature type="strand" evidence="8">
    <location>
        <begin position="134"/>
        <end position="137"/>
    </location>
</feature>
<feature type="strand" evidence="8">
    <location>
        <begin position="140"/>
        <end position="152"/>
    </location>
</feature>
<feature type="turn" evidence="8">
    <location>
        <begin position="160"/>
        <end position="163"/>
    </location>
</feature>
<feature type="helix" evidence="8">
    <location>
        <begin position="172"/>
        <end position="174"/>
    </location>
</feature>
<evidence type="ECO:0000250" key="1">
    <source>
        <dbReference type="UniProtKB" id="P28248"/>
    </source>
</evidence>
<evidence type="ECO:0000255" key="2">
    <source>
        <dbReference type="HAMAP-Rule" id="MF_00146"/>
    </source>
</evidence>
<evidence type="ECO:0000269" key="3">
    <source>
    </source>
</evidence>
<evidence type="ECO:0000303" key="4">
    <source>
    </source>
</evidence>
<evidence type="ECO:0000305" key="5"/>
<evidence type="ECO:0000305" key="6">
    <source>
    </source>
</evidence>
<evidence type="ECO:0007744" key="7">
    <source>
        <dbReference type="PDB" id="4XJC"/>
    </source>
</evidence>
<evidence type="ECO:0007829" key="8">
    <source>
        <dbReference type="PDB" id="4XJC"/>
    </source>
</evidence>
<gene>
    <name evidence="2" type="primary">dcd</name>
    <name evidence="4" type="synonym">dcdB</name>
    <name type="ordered locus">BH0368</name>
</gene>
<dbReference type="EC" id="3.5.4.30" evidence="2 3"/>
<dbReference type="EMBL" id="BA000004">
    <property type="protein sequence ID" value="BAB04087.1"/>
    <property type="molecule type" value="Genomic_DNA"/>
</dbReference>
<dbReference type="PIR" id="H83695">
    <property type="entry name" value="H83695"/>
</dbReference>
<dbReference type="RefSeq" id="WP_010896547.1">
    <property type="nucleotide sequence ID" value="NC_002570.2"/>
</dbReference>
<dbReference type="PDB" id="4XJC">
    <property type="method" value="X-ray"/>
    <property type="resolution" value="2.35 A"/>
    <property type="chains" value="A/B/C/D/E/F=1-177"/>
</dbReference>
<dbReference type="PDBsum" id="4XJC"/>
<dbReference type="SMR" id="Q9KFV3"/>
<dbReference type="STRING" id="272558.gene:10726221"/>
<dbReference type="GeneID" id="87595927"/>
<dbReference type="KEGG" id="bha:BH0368"/>
<dbReference type="eggNOG" id="COG0717">
    <property type="taxonomic scope" value="Bacteria"/>
</dbReference>
<dbReference type="HOGENOM" id="CLU_087476_2_1_9"/>
<dbReference type="OrthoDB" id="9780202at2"/>
<dbReference type="BRENDA" id="3.5.4.13">
    <property type="organism ID" value="661"/>
</dbReference>
<dbReference type="BRENDA" id="3.5.4.30">
    <property type="organism ID" value="661"/>
</dbReference>
<dbReference type="UniPathway" id="UPA00610">
    <property type="reaction ID" value="UER00667"/>
</dbReference>
<dbReference type="EvolutionaryTrace" id="Q9KFV3"/>
<dbReference type="Proteomes" id="UP000001258">
    <property type="component" value="Chromosome"/>
</dbReference>
<dbReference type="GO" id="GO:0033973">
    <property type="term" value="F:dCTP deaminase (dUMP-forming) activity"/>
    <property type="evidence" value="ECO:0007669"/>
    <property type="project" value="UniProtKB-UniRule"/>
</dbReference>
<dbReference type="GO" id="GO:0008829">
    <property type="term" value="F:dCTP deaminase activity"/>
    <property type="evidence" value="ECO:0007669"/>
    <property type="project" value="InterPro"/>
</dbReference>
<dbReference type="GO" id="GO:0000166">
    <property type="term" value="F:nucleotide binding"/>
    <property type="evidence" value="ECO:0007669"/>
    <property type="project" value="UniProtKB-KW"/>
</dbReference>
<dbReference type="GO" id="GO:0006226">
    <property type="term" value="P:dUMP biosynthetic process"/>
    <property type="evidence" value="ECO:0007669"/>
    <property type="project" value="UniProtKB-UniRule"/>
</dbReference>
<dbReference type="GO" id="GO:0006229">
    <property type="term" value="P:dUTP biosynthetic process"/>
    <property type="evidence" value="ECO:0007669"/>
    <property type="project" value="InterPro"/>
</dbReference>
<dbReference type="CDD" id="cd07557">
    <property type="entry name" value="trimeric_dUTPase"/>
    <property type="match status" value="1"/>
</dbReference>
<dbReference type="Gene3D" id="2.70.40.10">
    <property type="match status" value="1"/>
</dbReference>
<dbReference type="HAMAP" id="MF_00146">
    <property type="entry name" value="dCTP_deaminase"/>
    <property type="match status" value="1"/>
</dbReference>
<dbReference type="InterPro" id="IPR011962">
    <property type="entry name" value="dCTP_deaminase"/>
</dbReference>
<dbReference type="InterPro" id="IPR036157">
    <property type="entry name" value="dUTPase-like_sf"/>
</dbReference>
<dbReference type="InterPro" id="IPR033704">
    <property type="entry name" value="dUTPase_trimeric"/>
</dbReference>
<dbReference type="NCBIfam" id="TIGR02274">
    <property type="entry name" value="dCTP_deam"/>
    <property type="match status" value="1"/>
</dbReference>
<dbReference type="PANTHER" id="PTHR42680">
    <property type="entry name" value="DCTP DEAMINASE"/>
    <property type="match status" value="1"/>
</dbReference>
<dbReference type="PANTHER" id="PTHR42680:SF3">
    <property type="entry name" value="DCTP DEAMINASE"/>
    <property type="match status" value="1"/>
</dbReference>
<dbReference type="Pfam" id="PF22769">
    <property type="entry name" value="DCD"/>
    <property type="match status" value="1"/>
</dbReference>
<dbReference type="SUPFAM" id="SSF51283">
    <property type="entry name" value="dUTPase-like"/>
    <property type="match status" value="1"/>
</dbReference>
<sequence>MILSGKTISEKLTEKELEITPLTEEQIQPASVDLRLGPHFVTIDDSKEAVISFERPIRYREWTTSDETIVLPPHTFLLATTMETVKLPNHLTAFVEGRSSVGRLGLFIQNAGWVDPGFNGQITLELFNANRLPIELPIGRRICQLVFAEVTGEVAPYQGKYLFQKGATMSEIYKDAF</sequence>
<proteinExistence type="evidence at protein level"/>
<name>DCDB_HALH5</name>
<organism>
    <name type="scientific">Halalkalibacterium halodurans (strain ATCC BAA-125 / DSM 18197 / FERM 7344 / JCM 9153 / C-125)</name>
    <name type="common">Bacillus halodurans</name>
    <dbReference type="NCBI Taxonomy" id="272558"/>
    <lineage>
        <taxon>Bacteria</taxon>
        <taxon>Bacillati</taxon>
        <taxon>Bacillota</taxon>
        <taxon>Bacilli</taxon>
        <taxon>Bacillales</taxon>
        <taxon>Bacillaceae</taxon>
        <taxon>Halalkalibacterium (ex Joshi et al. 2022)</taxon>
    </lineage>
</organism>
<accession>Q9KFV3</accession>